<gene>
    <name evidence="1" type="primary">hutU</name>
    <name type="ordered locus">plu3193</name>
</gene>
<protein>
    <recommendedName>
        <fullName evidence="1">Urocanate hydratase</fullName>
        <shortName evidence="1">Urocanase</shortName>
        <ecNumber evidence="1">4.2.1.49</ecNumber>
    </recommendedName>
    <alternativeName>
        <fullName evidence="1">Imidazolonepropionate hydrolase</fullName>
    </alternativeName>
</protein>
<name>HUTU_PHOLL</name>
<feature type="chain" id="PRO_0000207342" description="Urocanate hydratase">
    <location>
        <begin position="1"/>
        <end position="559"/>
    </location>
</feature>
<feature type="active site" evidence="1">
    <location>
        <position position="412"/>
    </location>
</feature>
<feature type="binding site" evidence="1">
    <location>
        <begin position="54"/>
        <end position="55"/>
    </location>
    <ligand>
        <name>NAD(+)</name>
        <dbReference type="ChEBI" id="CHEBI:57540"/>
    </ligand>
</feature>
<feature type="binding site" evidence="1">
    <location>
        <position position="132"/>
    </location>
    <ligand>
        <name>NAD(+)</name>
        <dbReference type="ChEBI" id="CHEBI:57540"/>
    </ligand>
</feature>
<feature type="binding site" evidence="1">
    <location>
        <begin position="178"/>
        <end position="180"/>
    </location>
    <ligand>
        <name>NAD(+)</name>
        <dbReference type="ChEBI" id="CHEBI:57540"/>
    </ligand>
</feature>
<feature type="binding site" evidence="1">
    <location>
        <position position="198"/>
    </location>
    <ligand>
        <name>NAD(+)</name>
        <dbReference type="ChEBI" id="CHEBI:57540"/>
    </ligand>
</feature>
<feature type="binding site" evidence="1">
    <location>
        <position position="203"/>
    </location>
    <ligand>
        <name>NAD(+)</name>
        <dbReference type="ChEBI" id="CHEBI:57540"/>
    </ligand>
</feature>
<feature type="binding site" evidence="1">
    <location>
        <begin position="244"/>
        <end position="245"/>
    </location>
    <ligand>
        <name>NAD(+)</name>
        <dbReference type="ChEBI" id="CHEBI:57540"/>
    </ligand>
</feature>
<feature type="binding site" evidence="1">
    <location>
        <begin position="265"/>
        <end position="269"/>
    </location>
    <ligand>
        <name>NAD(+)</name>
        <dbReference type="ChEBI" id="CHEBI:57540"/>
    </ligand>
</feature>
<feature type="binding site" evidence="1">
    <location>
        <begin position="275"/>
        <end position="276"/>
    </location>
    <ligand>
        <name>NAD(+)</name>
        <dbReference type="ChEBI" id="CHEBI:57540"/>
    </ligand>
</feature>
<feature type="binding site" evidence="1">
    <location>
        <position position="324"/>
    </location>
    <ligand>
        <name>NAD(+)</name>
        <dbReference type="ChEBI" id="CHEBI:57540"/>
    </ligand>
</feature>
<feature type="binding site" evidence="1">
    <location>
        <position position="494"/>
    </location>
    <ligand>
        <name>NAD(+)</name>
        <dbReference type="ChEBI" id="CHEBI:57540"/>
    </ligand>
</feature>
<sequence length="559" mass="61549">MTAQNSKFRSVGIRAPRGTQLTAKSWLTEAPLRMLMNNLDPEVAENSYELVVYGGIGRAARNWECYDKIIETLKELEDDETLLIQSGKPVGVFKTHSNAPRVLIANSNLVPHWATWEHFNELDAKGLAMYGQMTAGSWIYIGSQGIVQGTYETFVEAGRQHYNGNLQGRWVLTAGLGGMGGAQPLAATLAGACSLNIECQQSRIDFRLRTGYVDEQAKDLDDALTRIEKYTQEGKAISIALCGNAAEILPELVRRGVRPDLVTDQTSAHDPLNGYLPKNWSWEEYRQRAISAPEEVIKAAKSSMVEHVKAMLIFQQQGIPVFDYGNNIRQMAYEVGVENAFDFPGFVPTYIRPLFCRGIGPFRWVALSGDPQDIYKTDAKVKELLPDDQHLHHWLDMARERISFQGLPARICWVGLGQRAKLGLAFNEMVRSGELSAPIVIGRDHLDSGSVASPNRETESMCDGSDAVSDWPLLNALLNTASGATWVSLHHGGGVGMGFSQHAGMVIVCDGTDEAAERIARVLHNDPATGVMRHADAGYEIAIHCAKEQGLDLPMLNTK</sequence>
<dbReference type="EC" id="4.2.1.49" evidence="1"/>
<dbReference type="EMBL" id="BX571869">
    <property type="protein sequence ID" value="CAE15567.1"/>
    <property type="molecule type" value="Genomic_DNA"/>
</dbReference>
<dbReference type="RefSeq" id="WP_011147400.1">
    <property type="nucleotide sequence ID" value="NC_005126.1"/>
</dbReference>
<dbReference type="SMR" id="Q7N295"/>
<dbReference type="STRING" id="243265.plu3193"/>
<dbReference type="GeneID" id="48849453"/>
<dbReference type="KEGG" id="plu:plu3193"/>
<dbReference type="eggNOG" id="COG2987">
    <property type="taxonomic scope" value="Bacteria"/>
</dbReference>
<dbReference type="HOGENOM" id="CLU_018868_0_1_6"/>
<dbReference type="OrthoDB" id="9764874at2"/>
<dbReference type="UniPathway" id="UPA00379">
    <property type="reaction ID" value="UER00550"/>
</dbReference>
<dbReference type="Proteomes" id="UP000002514">
    <property type="component" value="Chromosome"/>
</dbReference>
<dbReference type="GO" id="GO:0005737">
    <property type="term" value="C:cytoplasm"/>
    <property type="evidence" value="ECO:0007669"/>
    <property type="project" value="UniProtKB-SubCell"/>
</dbReference>
<dbReference type="GO" id="GO:0016153">
    <property type="term" value="F:urocanate hydratase activity"/>
    <property type="evidence" value="ECO:0007669"/>
    <property type="project" value="UniProtKB-UniRule"/>
</dbReference>
<dbReference type="GO" id="GO:0019556">
    <property type="term" value="P:L-histidine catabolic process to glutamate and formamide"/>
    <property type="evidence" value="ECO:0007669"/>
    <property type="project" value="UniProtKB-UniPathway"/>
</dbReference>
<dbReference type="GO" id="GO:0019557">
    <property type="term" value="P:L-histidine catabolic process to glutamate and formate"/>
    <property type="evidence" value="ECO:0007669"/>
    <property type="project" value="UniProtKB-UniPathway"/>
</dbReference>
<dbReference type="FunFam" id="3.40.50.10730:FF:000001">
    <property type="entry name" value="Urocanate hydratase"/>
    <property type="match status" value="1"/>
</dbReference>
<dbReference type="Gene3D" id="3.40.50.10730">
    <property type="entry name" value="Urocanase like domains"/>
    <property type="match status" value="1"/>
</dbReference>
<dbReference type="Gene3D" id="3.40.1770.10">
    <property type="entry name" value="Urocanase superfamily"/>
    <property type="match status" value="1"/>
</dbReference>
<dbReference type="HAMAP" id="MF_00577">
    <property type="entry name" value="HutU"/>
    <property type="match status" value="1"/>
</dbReference>
<dbReference type="InterPro" id="IPR055351">
    <property type="entry name" value="Urocanase"/>
</dbReference>
<dbReference type="InterPro" id="IPR023637">
    <property type="entry name" value="Urocanase-like"/>
</dbReference>
<dbReference type="InterPro" id="IPR035401">
    <property type="entry name" value="Urocanase_C"/>
</dbReference>
<dbReference type="InterPro" id="IPR038364">
    <property type="entry name" value="Urocanase_central_sf"/>
</dbReference>
<dbReference type="InterPro" id="IPR023636">
    <property type="entry name" value="Urocanase_CS"/>
</dbReference>
<dbReference type="InterPro" id="IPR035400">
    <property type="entry name" value="Urocanase_N"/>
</dbReference>
<dbReference type="InterPro" id="IPR035085">
    <property type="entry name" value="Urocanase_Rossmann-like"/>
</dbReference>
<dbReference type="InterPro" id="IPR036190">
    <property type="entry name" value="Urocanase_sf"/>
</dbReference>
<dbReference type="NCBIfam" id="TIGR01228">
    <property type="entry name" value="hutU"/>
    <property type="match status" value="1"/>
</dbReference>
<dbReference type="NCBIfam" id="NF003820">
    <property type="entry name" value="PRK05414.1"/>
    <property type="match status" value="1"/>
</dbReference>
<dbReference type="PANTHER" id="PTHR12216">
    <property type="entry name" value="UROCANATE HYDRATASE"/>
    <property type="match status" value="1"/>
</dbReference>
<dbReference type="PANTHER" id="PTHR12216:SF4">
    <property type="entry name" value="UROCANATE HYDRATASE"/>
    <property type="match status" value="1"/>
</dbReference>
<dbReference type="Pfam" id="PF01175">
    <property type="entry name" value="Urocanase"/>
    <property type="match status" value="1"/>
</dbReference>
<dbReference type="Pfam" id="PF17392">
    <property type="entry name" value="Urocanase_C"/>
    <property type="match status" value="1"/>
</dbReference>
<dbReference type="Pfam" id="PF17391">
    <property type="entry name" value="Urocanase_N"/>
    <property type="match status" value="1"/>
</dbReference>
<dbReference type="PIRSF" id="PIRSF001423">
    <property type="entry name" value="Urocanate_hydrat"/>
    <property type="match status" value="1"/>
</dbReference>
<dbReference type="SUPFAM" id="SSF111326">
    <property type="entry name" value="Urocanase"/>
    <property type="match status" value="1"/>
</dbReference>
<dbReference type="PROSITE" id="PS01233">
    <property type="entry name" value="UROCANASE"/>
    <property type="match status" value="1"/>
</dbReference>
<keyword id="KW-0963">Cytoplasm</keyword>
<keyword id="KW-0369">Histidine metabolism</keyword>
<keyword id="KW-0456">Lyase</keyword>
<keyword id="KW-0520">NAD</keyword>
<keyword id="KW-1185">Reference proteome</keyword>
<evidence type="ECO:0000255" key="1">
    <source>
        <dbReference type="HAMAP-Rule" id="MF_00577"/>
    </source>
</evidence>
<reference key="1">
    <citation type="journal article" date="2003" name="Nat. Biotechnol.">
        <title>The genome sequence of the entomopathogenic bacterium Photorhabdus luminescens.</title>
        <authorList>
            <person name="Duchaud E."/>
            <person name="Rusniok C."/>
            <person name="Frangeul L."/>
            <person name="Buchrieser C."/>
            <person name="Givaudan A."/>
            <person name="Taourit S."/>
            <person name="Bocs S."/>
            <person name="Boursaux-Eude C."/>
            <person name="Chandler M."/>
            <person name="Charles J.-F."/>
            <person name="Dassa E."/>
            <person name="Derose R."/>
            <person name="Derzelle S."/>
            <person name="Freyssinet G."/>
            <person name="Gaudriault S."/>
            <person name="Medigue C."/>
            <person name="Lanois A."/>
            <person name="Powell K."/>
            <person name="Siguier P."/>
            <person name="Vincent R."/>
            <person name="Wingate V."/>
            <person name="Zouine M."/>
            <person name="Glaser P."/>
            <person name="Boemare N."/>
            <person name="Danchin A."/>
            <person name="Kunst F."/>
        </authorList>
    </citation>
    <scope>NUCLEOTIDE SEQUENCE [LARGE SCALE GENOMIC DNA]</scope>
    <source>
        <strain>DSM 15139 / CIP 105565 / TT01</strain>
    </source>
</reference>
<organism>
    <name type="scientific">Photorhabdus laumondii subsp. laumondii (strain DSM 15139 / CIP 105565 / TT01)</name>
    <name type="common">Photorhabdus luminescens subsp. laumondii</name>
    <dbReference type="NCBI Taxonomy" id="243265"/>
    <lineage>
        <taxon>Bacteria</taxon>
        <taxon>Pseudomonadati</taxon>
        <taxon>Pseudomonadota</taxon>
        <taxon>Gammaproteobacteria</taxon>
        <taxon>Enterobacterales</taxon>
        <taxon>Morganellaceae</taxon>
        <taxon>Photorhabdus</taxon>
    </lineage>
</organism>
<proteinExistence type="inferred from homology"/>
<comment type="function">
    <text evidence="1">Catalyzes the conversion of urocanate to 4-imidazolone-5-propionate.</text>
</comment>
<comment type="catalytic activity">
    <reaction evidence="1">
        <text>4-imidazolone-5-propanoate = trans-urocanate + H2O</text>
        <dbReference type="Rhea" id="RHEA:13101"/>
        <dbReference type="ChEBI" id="CHEBI:15377"/>
        <dbReference type="ChEBI" id="CHEBI:17771"/>
        <dbReference type="ChEBI" id="CHEBI:77893"/>
        <dbReference type="EC" id="4.2.1.49"/>
    </reaction>
</comment>
<comment type="cofactor">
    <cofactor evidence="1">
        <name>NAD(+)</name>
        <dbReference type="ChEBI" id="CHEBI:57540"/>
    </cofactor>
    <text evidence="1">Binds 1 NAD(+) per subunit.</text>
</comment>
<comment type="pathway">
    <text evidence="1">Amino-acid degradation; L-histidine degradation into L-glutamate; N-formimidoyl-L-glutamate from L-histidine: step 2/3.</text>
</comment>
<comment type="subcellular location">
    <subcellularLocation>
        <location evidence="1">Cytoplasm</location>
    </subcellularLocation>
</comment>
<comment type="similarity">
    <text evidence="1">Belongs to the urocanase family.</text>
</comment>
<accession>Q7N295</accession>